<evidence type="ECO:0000250" key="1"/>
<evidence type="ECO:0000250" key="2">
    <source>
        <dbReference type="UniProtKB" id="P30839"/>
    </source>
</evidence>
<evidence type="ECO:0000250" key="3">
    <source>
        <dbReference type="UniProtKB" id="P51648"/>
    </source>
</evidence>
<evidence type="ECO:0000255" key="4"/>
<evidence type="ECO:0000255" key="5">
    <source>
        <dbReference type="PROSITE-ProRule" id="PRU10007"/>
    </source>
</evidence>
<evidence type="ECO:0000255" key="6">
    <source>
        <dbReference type="PROSITE-ProRule" id="PRU10008"/>
    </source>
</evidence>
<evidence type="ECO:0000269" key="7">
    <source>
    </source>
</evidence>
<evidence type="ECO:0000305" key="8"/>
<name>AL3A2_MOUSE</name>
<protein>
    <recommendedName>
        <fullName>Aldehyde dehydrogenase family 3 member A2</fullName>
        <ecNumber evidence="7">1.2.1.3</ecNumber>
        <ecNumber evidence="3">1.2.1.94</ecNumber>
    </recommendedName>
    <alternativeName>
        <fullName>Aldehyde dehydrogenase 3</fullName>
    </alternativeName>
    <alternativeName>
        <fullName>Fatty aldehyde dehydrogenase</fullName>
    </alternativeName>
</protein>
<feature type="chain" id="PRO_0000056475" description="Aldehyde dehydrogenase family 3 member A2">
    <location>
        <begin position="1"/>
        <end position="484"/>
    </location>
</feature>
<feature type="topological domain" description="Cytoplasmic">
    <location>
        <begin position="1"/>
        <end position="463"/>
    </location>
</feature>
<feature type="transmembrane region" description="Helical" evidence="4">
    <location>
        <begin position="464"/>
        <end position="484"/>
    </location>
</feature>
<feature type="short sequence motif" description="Prevents secretion from ER" evidence="1">
    <location>
        <begin position="481"/>
        <end position="484"/>
    </location>
</feature>
<feature type="active site" evidence="5">
    <location>
        <position position="207"/>
    </location>
</feature>
<feature type="active site" evidence="6">
    <location>
        <position position="241"/>
    </location>
</feature>
<feature type="binding site" evidence="4">
    <location>
        <begin position="185"/>
        <end position="190"/>
    </location>
    <ligand>
        <name>NAD(+)</name>
        <dbReference type="ChEBI" id="CHEBI:57540"/>
    </ligand>
</feature>
<feature type="modified residue" description="Phosphoserine" evidence="3">
    <location>
        <position position="293"/>
    </location>
</feature>
<feature type="sequence conflict" description="In Ref. 1; AAB06232." evidence="8" ref="1">
    <original>P</original>
    <variation>L</variation>
    <location>
        <position position="19"/>
    </location>
</feature>
<feature type="sequence conflict" description="In Ref. 1; AAB06232." evidence="8" ref="1">
    <original>I</original>
    <variation>V</variation>
    <location>
        <position position="229"/>
    </location>
</feature>
<feature type="sequence conflict" description="In Ref. 1; AAB06232." evidence="8" ref="1">
    <original>T</original>
    <variation>A</variation>
    <location>
        <position position="418"/>
    </location>
</feature>
<organism>
    <name type="scientific">Mus musculus</name>
    <name type="common">Mouse</name>
    <dbReference type="NCBI Taxonomy" id="10090"/>
    <lineage>
        <taxon>Eukaryota</taxon>
        <taxon>Metazoa</taxon>
        <taxon>Chordata</taxon>
        <taxon>Craniata</taxon>
        <taxon>Vertebrata</taxon>
        <taxon>Euteleostomi</taxon>
        <taxon>Mammalia</taxon>
        <taxon>Eutheria</taxon>
        <taxon>Euarchontoglires</taxon>
        <taxon>Glires</taxon>
        <taxon>Rodentia</taxon>
        <taxon>Myomorpha</taxon>
        <taxon>Muroidea</taxon>
        <taxon>Muridae</taxon>
        <taxon>Murinae</taxon>
        <taxon>Mus</taxon>
        <taxon>Mus</taxon>
    </lineage>
</organism>
<sequence>MERQVLRLRQAFRSGRSRPLRFRLQQLEALRRMVQEREKEILAAIAADLSKSELNAYSHEVITILGEIDFMLGNLPELASARPAKKNLLTMMDEAYVQPEPLGVVLIIGAWNYPFVLTMQPLVGAIAAGNAAIVKPSELSENTAKILAELLPQYLDQDLYAIVNGGIPETTELLKQRFDHILYTGNTAVGKIVMEAAAKHLTPVTLELGGKSPCYIDRDCDLDVACRRIAWGKYMNCGQTCIAPDYILCEASLQNQIVQKIKETVKDFYGENIKASPDYERIINLRHFKRLQSLLKGQKIAFGGEMDEATRYLAPTILTDVDPNSKVMQEEIFGPILPIVSVKNVDEAINFINDREKPLALYVFSRNNKLIKRVIDETSSGGVTGNDVIMHFTVNSLPFGGVGASGMGAYHGKYSFDTFSHQRPCLLKGLKGESVNKLRYPPNSESKVSWAKFFLLKQFNKGRLGMLLFVCLVAVAAVIVKDQL</sequence>
<accession>P47740</accession>
<accession>Q99L64</accession>
<reference key="1">
    <citation type="journal article" date="1996" name="DNA Cell Biol.">
        <title>Mouse microsomal class 3 aldehyde dehydrogenase: AHD3 cDNA sequence, inducibility by dioxin and clofibrate, and genetic mapping.</title>
        <authorList>
            <person name="Vasiliou V."/>
            <person name="Kozak C.A."/>
            <person name="Lindahl R."/>
            <person name="Nebert D.W."/>
        </authorList>
    </citation>
    <scope>NUCLEOTIDE SEQUENCE [MRNA]</scope>
    <source>
        <strain>C57BL/6 X CBA</strain>
        <tissue>Liver</tissue>
    </source>
</reference>
<reference key="2">
    <citation type="journal article" date="2005" name="Science">
        <title>The transcriptional landscape of the mammalian genome.</title>
        <authorList>
            <person name="Carninci P."/>
            <person name="Kasukawa T."/>
            <person name="Katayama S."/>
            <person name="Gough J."/>
            <person name="Frith M.C."/>
            <person name="Maeda N."/>
            <person name="Oyama R."/>
            <person name="Ravasi T."/>
            <person name="Lenhard B."/>
            <person name="Wells C."/>
            <person name="Kodzius R."/>
            <person name="Shimokawa K."/>
            <person name="Bajic V.B."/>
            <person name="Brenner S.E."/>
            <person name="Batalov S."/>
            <person name="Forrest A.R."/>
            <person name="Zavolan M."/>
            <person name="Davis M.J."/>
            <person name="Wilming L.G."/>
            <person name="Aidinis V."/>
            <person name="Allen J.E."/>
            <person name="Ambesi-Impiombato A."/>
            <person name="Apweiler R."/>
            <person name="Aturaliya R.N."/>
            <person name="Bailey T.L."/>
            <person name="Bansal M."/>
            <person name="Baxter L."/>
            <person name="Beisel K.W."/>
            <person name="Bersano T."/>
            <person name="Bono H."/>
            <person name="Chalk A.M."/>
            <person name="Chiu K.P."/>
            <person name="Choudhary V."/>
            <person name="Christoffels A."/>
            <person name="Clutterbuck D.R."/>
            <person name="Crowe M.L."/>
            <person name="Dalla E."/>
            <person name="Dalrymple B.P."/>
            <person name="de Bono B."/>
            <person name="Della Gatta G."/>
            <person name="di Bernardo D."/>
            <person name="Down T."/>
            <person name="Engstrom P."/>
            <person name="Fagiolini M."/>
            <person name="Faulkner G."/>
            <person name="Fletcher C.F."/>
            <person name="Fukushima T."/>
            <person name="Furuno M."/>
            <person name="Futaki S."/>
            <person name="Gariboldi M."/>
            <person name="Georgii-Hemming P."/>
            <person name="Gingeras T.R."/>
            <person name="Gojobori T."/>
            <person name="Green R.E."/>
            <person name="Gustincich S."/>
            <person name="Harbers M."/>
            <person name="Hayashi Y."/>
            <person name="Hensch T.K."/>
            <person name="Hirokawa N."/>
            <person name="Hill D."/>
            <person name="Huminiecki L."/>
            <person name="Iacono M."/>
            <person name="Ikeo K."/>
            <person name="Iwama A."/>
            <person name="Ishikawa T."/>
            <person name="Jakt M."/>
            <person name="Kanapin A."/>
            <person name="Katoh M."/>
            <person name="Kawasawa Y."/>
            <person name="Kelso J."/>
            <person name="Kitamura H."/>
            <person name="Kitano H."/>
            <person name="Kollias G."/>
            <person name="Krishnan S.P."/>
            <person name="Kruger A."/>
            <person name="Kummerfeld S.K."/>
            <person name="Kurochkin I.V."/>
            <person name="Lareau L.F."/>
            <person name="Lazarevic D."/>
            <person name="Lipovich L."/>
            <person name="Liu J."/>
            <person name="Liuni S."/>
            <person name="McWilliam S."/>
            <person name="Madan Babu M."/>
            <person name="Madera M."/>
            <person name="Marchionni L."/>
            <person name="Matsuda H."/>
            <person name="Matsuzawa S."/>
            <person name="Miki H."/>
            <person name="Mignone F."/>
            <person name="Miyake S."/>
            <person name="Morris K."/>
            <person name="Mottagui-Tabar S."/>
            <person name="Mulder N."/>
            <person name="Nakano N."/>
            <person name="Nakauchi H."/>
            <person name="Ng P."/>
            <person name="Nilsson R."/>
            <person name="Nishiguchi S."/>
            <person name="Nishikawa S."/>
            <person name="Nori F."/>
            <person name="Ohara O."/>
            <person name="Okazaki Y."/>
            <person name="Orlando V."/>
            <person name="Pang K.C."/>
            <person name="Pavan W.J."/>
            <person name="Pavesi G."/>
            <person name="Pesole G."/>
            <person name="Petrovsky N."/>
            <person name="Piazza S."/>
            <person name="Reed J."/>
            <person name="Reid J.F."/>
            <person name="Ring B.Z."/>
            <person name="Ringwald M."/>
            <person name="Rost B."/>
            <person name="Ruan Y."/>
            <person name="Salzberg S.L."/>
            <person name="Sandelin A."/>
            <person name="Schneider C."/>
            <person name="Schoenbach C."/>
            <person name="Sekiguchi K."/>
            <person name="Semple C.A."/>
            <person name="Seno S."/>
            <person name="Sessa L."/>
            <person name="Sheng Y."/>
            <person name="Shibata Y."/>
            <person name="Shimada H."/>
            <person name="Shimada K."/>
            <person name="Silva D."/>
            <person name="Sinclair B."/>
            <person name="Sperling S."/>
            <person name="Stupka E."/>
            <person name="Sugiura K."/>
            <person name="Sultana R."/>
            <person name="Takenaka Y."/>
            <person name="Taki K."/>
            <person name="Tammoja K."/>
            <person name="Tan S.L."/>
            <person name="Tang S."/>
            <person name="Taylor M.S."/>
            <person name="Tegner J."/>
            <person name="Teichmann S.A."/>
            <person name="Ueda H.R."/>
            <person name="van Nimwegen E."/>
            <person name="Verardo R."/>
            <person name="Wei C.L."/>
            <person name="Yagi K."/>
            <person name="Yamanishi H."/>
            <person name="Zabarovsky E."/>
            <person name="Zhu S."/>
            <person name="Zimmer A."/>
            <person name="Hide W."/>
            <person name="Bult C."/>
            <person name="Grimmond S.M."/>
            <person name="Teasdale R.D."/>
            <person name="Liu E.T."/>
            <person name="Brusic V."/>
            <person name="Quackenbush J."/>
            <person name="Wahlestedt C."/>
            <person name="Mattick J.S."/>
            <person name="Hume D.A."/>
            <person name="Kai C."/>
            <person name="Sasaki D."/>
            <person name="Tomaru Y."/>
            <person name="Fukuda S."/>
            <person name="Kanamori-Katayama M."/>
            <person name="Suzuki M."/>
            <person name="Aoki J."/>
            <person name="Arakawa T."/>
            <person name="Iida J."/>
            <person name="Imamura K."/>
            <person name="Itoh M."/>
            <person name="Kato T."/>
            <person name="Kawaji H."/>
            <person name="Kawagashira N."/>
            <person name="Kawashima T."/>
            <person name="Kojima M."/>
            <person name="Kondo S."/>
            <person name="Konno H."/>
            <person name="Nakano K."/>
            <person name="Ninomiya N."/>
            <person name="Nishio T."/>
            <person name="Okada M."/>
            <person name="Plessy C."/>
            <person name="Shibata K."/>
            <person name="Shiraki T."/>
            <person name="Suzuki S."/>
            <person name="Tagami M."/>
            <person name="Waki K."/>
            <person name="Watahiki A."/>
            <person name="Okamura-Oho Y."/>
            <person name="Suzuki H."/>
            <person name="Kawai J."/>
            <person name="Hayashizaki Y."/>
        </authorList>
    </citation>
    <scope>NUCLEOTIDE SEQUENCE [LARGE SCALE MRNA]</scope>
    <source>
        <strain>C57BL/6J</strain>
        <strain>NOD</strain>
        <tissue>Head</tissue>
        <tissue>Spinal cord</tissue>
        <tissue>Stomach</tissue>
        <tissue>Thymus</tissue>
    </source>
</reference>
<reference key="3">
    <citation type="journal article" date="2009" name="PLoS Biol.">
        <title>Lineage-specific biology revealed by a finished genome assembly of the mouse.</title>
        <authorList>
            <person name="Church D.M."/>
            <person name="Goodstadt L."/>
            <person name="Hillier L.W."/>
            <person name="Zody M.C."/>
            <person name="Goldstein S."/>
            <person name="She X."/>
            <person name="Bult C.J."/>
            <person name="Agarwala R."/>
            <person name="Cherry J.L."/>
            <person name="DiCuccio M."/>
            <person name="Hlavina W."/>
            <person name="Kapustin Y."/>
            <person name="Meric P."/>
            <person name="Maglott D."/>
            <person name="Birtle Z."/>
            <person name="Marques A.C."/>
            <person name="Graves T."/>
            <person name="Zhou S."/>
            <person name="Teague B."/>
            <person name="Potamousis K."/>
            <person name="Churas C."/>
            <person name="Place M."/>
            <person name="Herschleb J."/>
            <person name="Runnheim R."/>
            <person name="Forrest D."/>
            <person name="Amos-Landgraf J."/>
            <person name="Schwartz D.C."/>
            <person name="Cheng Z."/>
            <person name="Lindblad-Toh K."/>
            <person name="Eichler E.E."/>
            <person name="Ponting C.P."/>
        </authorList>
    </citation>
    <scope>NUCLEOTIDE SEQUENCE [LARGE SCALE GENOMIC DNA]</scope>
    <source>
        <strain>C57BL/6J</strain>
    </source>
</reference>
<reference key="4">
    <citation type="journal article" date="2004" name="Genome Res.">
        <title>The status, quality, and expansion of the NIH full-length cDNA project: the Mammalian Gene Collection (MGC).</title>
        <authorList>
            <consortium name="The MGC Project Team"/>
        </authorList>
    </citation>
    <scope>NUCLEOTIDE SEQUENCE [LARGE SCALE MRNA]</scope>
    <source>
        <tissue>Mammary tumor</tissue>
    </source>
</reference>
<reference key="5">
    <citation type="journal article" date="2010" name="Cell">
        <title>A tissue-specific atlas of mouse protein phosphorylation and expression.</title>
        <authorList>
            <person name="Huttlin E.L."/>
            <person name="Jedrychowski M.P."/>
            <person name="Elias J.E."/>
            <person name="Goswami T."/>
            <person name="Rad R."/>
            <person name="Beausoleil S.A."/>
            <person name="Villen J."/>
            <person name="Haas W."/>
            <person name="Sowa M.E."/>
            <person name="Gygi S.P."/>
        </authorList>
    </citation>
    <scope>IDENTIFICATION BY MASS SPECTROMETRY [LARGE SCALE ANALYSIS]</scope>
    <source>
        <tissue>Brain</tissue>
        <tissue>Brown adipose tissue</tissue>
        <tissue>Heart</tissue>
        <tissue>Kidney</tissue>
        <tissue>Liver</tissue>
        <tissue>Lung</tissue>
        <tissue>Pancreas</tissue>
        <tissue>Spleen</tissue>
        <tissue>Testis</tissue>
    </source>
</reference>
<reference key="6">
    <citation type="journal article" date="2015" name="Biochem. J.">
        <title>Mouse aldehyde dehydrogenase ALDH3B2 is localized to lipid droplets via two C-terminal tryptophan residues and lipid modification.</title>
        <authorList>
            <person name="Kitamura T."/>
            <person name="Takagi S."/>
            <person name="Naganuma T."/>
            <person name="Kihara A."/>
        </authorList>
    </citation>
    <scope>FUNCTION</scope>
    <scope>CATALYTIC ACTIVITY</scope>
    <scope>SUBCELLULAR LOCATION</scope>
</reference>
<dbReference type="EC" id="1.2.1.3" evidence="7"/>
<dbReference type="EC" id="1.2.1.94" evidence="3"/>
<dbReference type="EMBL" id="U14390">
    <property type="protein sequence ID" value="AAB06232.1"/>
    <property type="molecule type" value="mRNA"/>
</dbReference>
<dbReference type="EMBL" id="AK079639">
    <property type="protein sequence ID" value="BAC37712.1"/>
    <property type="molecule type" value="mRNA"/>
</dbReference>
<dbReference type="EMBL" id="AK140932">
    <property type="protein sequence ID" value="BAE24523.1"/>
    <property type="molecule type" value="mRNA"/>
</dbReference>
<dbReference type="EMBL" id="AK159246">
    <property type="protein sequence ID" value="BAE34928.1"/>
    <property type="molecule type" value="mRNA"/>
</dbReference>
<dbReference type="EMBL" id="AK163040">
    <property type="protein sequence ID" value="BAE37166.1"/>
    <property type="molecule type" value="mRNA"/>
</dbReference>
<dbReference type="EMBL" id="AK169157">
    <property type="protein sequence ID" value="BAE40936.1"/>
    <property type="molecule type" value="mRNA"/>
</dbReference>
<dbReference type="EMBL" id="AK170195">
    <property type="protein sequence ID" value="BAE41628.1"/>
    <property type="molecule type" value="mRNA"/>
</dbReference>
<dbReference type="EMBL" id="AL672172">
    <property type="status" value="NOT_ANNOTATED_CDS"/>
    <property type="molecule type" value="Genomic_DNA"/>
</dbReference>
<dbReference type="EMBL" id="BC003797">
    <property type="protein sequence ID" value="AAH03797.1"/>
    <property type="molecule type" value="mRNA"/>
</dbReference>
<dbReference type="CCDS" id="CCDS24809.1"/>
<dbReference type="RefSeq" id="NP_031463.2">
    <property type="nucleotide sequence ID" value="NM_007437.6"/>
</dbReference>
<dbReference type="SMR" id="P47740"/>
<dbReference type="BioGRID" id="198066">
    <property type="interactions" value="9"/>
</dbReference>
<dbReference type="FunCoup" id="P47740">
    <property type="interactions" value="3085"/>
</dbReference>
<dbReference type="STRING" id="10090.ENSMUSP00000073764"/>
<dbReference type="SwissLipids" id="SLP:000001741"/>
<dbReference type="GlyGen" id="P47740">
    <property type="glycosylation" value="1 site, 1 O-linked glycan (1 site)"/>
</dbReference>
<dbReference type="iPTMnet" id="P47740"/>
<dbReference type="PhosphoSitePlus" id="P47740"/>
<dbReference type="SwissPalm" id="P47740"/>
<dbReference type="jPOST" id="P47740"/>
<dbReference type="PaxDb" id="10090-ENSMUSP00000073764"/>
<dbReference type="ProteomicsDB" id="282068"/>
<dbReference type="Pumba" id="P47740"/>
<dbReference type="Antibodypedia" id="2232">
    <property type="antibodies" value="484 antibodies from 32 providers"/>
</dbReference>
<dbReference type="DNASU" id="11671"/>
<dbReference type="Ensembl" id="ENSMUST00000074127.14">
    <property type="protein sequence ID" value="ENSMUSP00000073764.8"/>
    <property type="gene ID" value="ENSMUSG00000010025.20"/>
</dbReference>
<dbReference type="GeneID" id="11671"/>
<dbReference type="KEGG" id="mmu:11671"/>
<dbReference type="UCSC" id="uc007jhf.2">
    <property type="organism name" value="mouse"/>
</dbReference>
<dbReference type="AGR" id="MGI:1353452"/>
<dbReference type="CTD" id="224"/>
<dbReference type="MGI" id="MGI:1353452">
    <property type="gene designation" value="Aldh3a2"/>
</dbReference>
<dbReference type="VEuPathDB" id="HostDB:ENSMUSG00000010025"/>
<dbReference type="eggNOG" id="KOG2456">
    <property type="taxonomic scope" value="Eukaryota"/>
</dbReference>
<dbReference type="GeneTree" id="ENSGT00940000157944"/>
<dbReference type="HOGENOM" id="CLU_005391_3_0_1"/>
<dbReference type="InParanoid" id="P47740"/>
<dbReference type="OMA" id="EIDWCKQ"/>
<dbReference type="TreeFam" id="TF314264"/>
<dbReference type="BRENDA" id="1.2.1.3">
    <property type="organism ID" value="3474"/>
</dbReference>
<dbReference type="Reactome" id="R-MMU-389599">
    <property type="pathway name" value="Alpha-oxidation of phytanate"/>
</dbReference>
<dbReference type="Reactome" id="R-MMU-9603798">
    <property type="pathway name" value="Class I peroxisomal membrane protein import"/>
</dbReference>
<dbReference type="Reactome" id="R-MMU-9609523">
    <property type="pathway name" value="Insertion of tail-anchored proteins into the endoplasmic reticulum membrane"/>
</dbReference>
<dbReference type="Reactome" id="R-MMU-9696270">
    <property type="pathway name" value="RND2 GTPase cycle"/>
</dbReference>
<dbReference type="Reactome" id="R-MMU-9696273">
    <property type="pathway name" value="RND1 GTPase cycle"/>
</dbReference>
<dbReference type="Reactome" id="R-MMU-9845614">
    <property type="pathway name" value="Sphingolipid catabolism"/>
</dbReference>
<dbReference type="BioGRID-ORCS" id="11671">
    <property type="hits" value="1 hit in 81 CRISPR screens"/>
</dbReference>
<dbReference type="CD-CODE" id="CE726F99">
    <property type="entry name" value="Postsynaptic density"/>
</dbReference>
<dbReference type="ChiTaRS" id="Aldh3a2">
    <property type="organism name" value="mouse"/>
</dbReference>
<dbReference type="PRO" id="PR:P47740"/>
<dbReference type="Proteomes" id="UP000000589">
    <property type="component" value="Chromosome 11"/>
</dbReference>
<dbReference type="RNAct" id="P47740">
    <property type="molecule type" value="protein"/>
</dbReference>
<dbReference type="Bgee" id="ENSMUSG00000010025">
    <property type="expression patterns" value="Expressed in prostate gland ventral lobe and 255 other cell types or tissues"/>
</dbReference>
<dbReference type="ExpressionAtlas" id="P47740">
    <property type="expression patterns" value="baseline and differential"/>
</dbReference>
<dbReference type="GO" id="GO:0005783">
    <property type="term" value="C:endoplasmic reticulum"/>
    <property type="evidence" value="ECO:0000314"/>
    <property type="project" value="UniProtKB"/>
</dbReference>
<dbReference type="GO" id="GO:0005789">
    <property type="term" value="C:endoplasmic reticulum membrane"/>
    <property type="evidence" value="ECO:0007669"/>
    <property type="project" value="UniProtKB-SubCell"/>
</dbReference>
<dbReference type="GO" id="GO:0016020">
    <property type="term" value="C:membrane"/>
    <property type="evidence" value="ECO:0000314"/>
    <property type="project" value="MGI"/>
</dbReference>
<dbReference type="GO" id="GO:0005743">
    <property type="term" value="C:mitochondrial inner membrane"/>
    <property type="evidence" value="ECO:0007005"/>
    <property type="project" value="MGI"/>
</dbReference>
<dbReference type="GO" id="GO:0005739">
    <property type="term" value="C:mitochondrion"/>
    <property type="evidence" value="ECO:0007005"/>
    <property type="project" value="MGI"/>
</dbReference>
<dbReference type="GO" id="GO:0004029">
    <property type="term" value="F:aldehyde dehydrogenase (NAD+) activity"/>
    <property type="evidence" value="ECO:0000314"/>
    <property type="project" value="MGI"/>
</dbReference>
<dbReference type="GO" id="GO:0050061">
    <property type="term" value="F:long-chain fatty aldehyde dehydrogenase (NAD+) activity"/>
    <property type="evidence" value="ECO:0000250"/>
    <property type="project" value="UniProtKB"/>
</dbReference>
<dbReference type="GO" id="GO:0046577">
    <property type="term" value="F:long-chain-alcohol oxidase activity"/>
    <property type="evidence" value="ECO:0007669"/>
    <property type="project" value="Ensembl"/>
</dbReference>
<dbReference type="GO" id="GO:0052814">
    <property type="term" value="F:medium-chain fatty aldehyde dehydrogenase (NAD+) activity"/>
    <property type="evidence" value="ECO:0000250"/>
    <property type="project" value="UniProtKB"/>
</dbReference>
<dbReference type="GO" id="GO:0042803">
    <property type="term" value="F:protein homodimerization activity"/>
    <property type="evidence" value="ECO:0007669"/>
    <property type="project" value="Ensembl"/>
</dbReference>
<dbReference type="GO" id="GO:0006081">
    <property type="term" value="P:aldehyde metabolic process"/>
    <property type="evidence" value="ECO:0000305"/>
    <property type="project" value="MGI"/>
</dbReference>
<dbReference type="GO" id="GO:0007417">
    <property type="term" value="P:central nervous system development"/>
    <property type="evidence" value="ECO:0007669"/>
    <property type="project" value="Ensembl"/>
</dbReference>
<dbReference type="GO" id="GO:0008544">
    <property type="term" value="P:epidermis development"/>
    <property type="evidence" value="ECO:0007669"/>
    <property type="project" value="Ensembl"/>
</dbReference>
<dbReference type="GO" id="GO:0006631">
    <property type="term" value="P:fatty acid metabolic process"/>
    <property type="evidence" value="ECO:0007669"/>
    <property type="project" value="UniProtKB-KW"/>
</dbReference>
<dbReference type="GO" id="GO:0046458">
    <property type="term" value="P:hexadecanal metabolic process"/>
    <property type="evidence" value="ECO:0000250"/>
    <property type="project" value="UniProtKB"/>
</dbReference>
<dbReference type="GO" id="GO:0007422">
    <property type="term" value="P:peripheral nervous system development"/>
    <property type="evidence" value="ECO:0007669"/>
    <property type="project" value="Ensembl"/>
</dbReference>
<dbReference type="GO" id="GO:0033306">
    <property type="term" value="P:phytol metabolic process"/>
    <property type="evidence" value="ECO:0007669"/>
    <property type="project" value="Ensembl"/>
</dbReference>
<dbReference type="CDD" id="cd07132">
    <property type="entry name" value="ALDH_F3AB"/>
    <property type="match status" value="1"/>
</dbReference>
<dbReference type="FunFam" id="3.40.309.10:FF:000003">
    <property type="entry name" value="Aldehyde dehydrogenase"/>
    <property type="match status" value="1"/>
</dbReference>
<dbReference type="FunFam" id="3.40.605.10:FF:000004">
    <property type="entry name" value="Aldehyde dehydrogenase"/>
    <property type="match status" value="1"/>
</dbReference>
<dbReference type="Gene3D" id="3.40.605.10">
    <property type="entry name" value="Aldehyde Dehydrogenase, Chain A, domain 1"/>
    <property type="match status" value="1"/>
</dbReference>
<dbReference type="Gene3D" id="3.40.309.10">
    <property type="entry name" value="Aldehyde Dehydrogenase, Chain A, domain 2"/>
    <property type="match status" value="1"/>
</dbReference>
<dbReference type="InterPro" id="IPR016161">
    <property type="entry name" value="Ald_DH/histidinol_DH"/>
</dbReference>
<dbReference type="InterPro" id="IPR016163">
    <property type="entry name" value="Ald_DH_C"/>
</dbReference>
<dbReference type="InterPro" id="IPR016160">
    <property type="entry name" value="Ald_DH_CS_CYS"/>
</dbReference>
<dbReference type="InterPro" id="IPR029510">
    <property type="entry name" value="Ald_DH_CS_GLU"/>
</dbReference>
<dbReference type="InterPro" id="IPR016162">
    <property type="entry name" value="Ald_DH_N"/>
</dbReference>
<dbReference type="InterPro" id="IPR015590">
    <property type="entry name" value="Aldehyde_DH_dom"/>
</dbReference>
<dbReference type="InterPro" id="IPR012394">
    <property type="entry name" value="Aldehyde_DH_NAD(P)"/>
</dbReference>
<dbReference type="PANTHER" id="PTHR43570">
    <property type="entry name" value="ALDEHYDE DEHYDROGENASE"/>
    <property type="match status" value="1"/>
</dbReference>
<dbReference type="PANTHER" id="PTHR43570:SF9">
    <property type="entry name" value="ALDEHYDE DEHYDROGENASE FAMILY 3 MEMBER A2"/>
    <property type="match status" value="1"/>
</dbReference>
<dbReference type="Pfam" id="PF00171">
    <property type="entry name" value="Aldedh"/>
    <property type="match status" value="1"/>
</dbReference>
<dbReference type="PIRSF" id="PIRSF036492">
    <property type="entry name" value="ALDH"/>
    <property type="match status" value="1"/>
</dbReference>
<dbReference type="SUPFAM" id="SSF53720">
    <property type="entry name" value="ALDH-like"/>
    <property type="match status" value="1"/>
</dbReference>
<dbReference type="PROSITE" id="PS00070">
    <property type="entry name" value="ALDEHYDE_DEHYDR_CYS"/>
    <property type="match status" value="1"/>
</dbReference>
<dbReference type="PROSITE" id="PS00687">
    <property type="entry name" value="ALDEHYDE_DEHYDR_GLU"/>
    <property type="match status" value="1"/>
</dbReference>
<keyword id="KW-0256">Endoplasmic reticulum</keyword>
<keyword id="KW-0276">Fatty acid metabolism</keyword>
<keyword id="KW-0443">Lipid metabolism</keyword>
<keyword id="KW-0472">Membrane</keyword>
<keyword id="KW-0492">Microsome</keyword>
<keyword id="KW-0520">NAD</keyword>
<keyword id="KW-0560">Oxidoreductase</keyword>
<keyword id="KW-0597">Phosphoprotein</keyword>
<keyword id="KW-1185">Reference proteome</keyword>
<keyword id="KW-0812">Transmembrane</keyword>
<keyword id="KW-1133">Transmembrane helix</keyword>
<proteinExistence type="evidence at protein level"/>
<gene>
    <name type="primary">Aldh3a2</name>
    <name type="synonym">Ahd-3</name>
    <name type="synonym">Ahd3</name>
    <name type="synonym">Aldh3</name>
    <name type="synonym">Aldh4</name>
</gene>
<comment type="function">
    <text evidence="7">Catalyzes the oxidation of medium and long-chain aliphatic aldehydes to fatty acids. Active on a variety of saturated and unsaturated aliphatic aldehydes between 6 and 24 carbons in length (PubMed:25286108). Responsible for conversion of the sphingosine 1-phosphate (S1P) degradation product hexadecenal to hexadecenoic acid (PubMed:25286108).</text>
</comment>
<comment type="catalytic activity">
    <reaction evidence="7">
        <text>an aldehyde + NAD(+) + H2O = a carboxylate + NADH + 2 H(+)</text>
        <dbReference type="Rhea" id="RHEA:16185"/>
        <dbReference type="ChEBI" id="CHEBI:15377"/>
        <dbReference type="ChEBI" id="CHEBI:15378"/>
        <dbReference type="ChEBI" id="CHEBI:17478"/>
        <dbReference type="ChEBI" id="CHEBI:29067"/>
        <dbReference type="ChEBI" id="CHEBI:57540"/>
        <dbReference type="ChEBI" id="CHEBI:57945"/>
        <dbReference type="EC" id="1.2.1.3"/>
    </reaction>
</comment>
<comment type="catalytic activity">
    <reaction evidence="7">
        <text>a fatty aldehyde + NAD(+) + H2O = a fatty acid + NADH + 2 H(+)</text>
        <dbReference type="Rhea" id="RHEA:49832"/>
        <dbReference type="ChEBI" id="CHEBI:15377"/>
        <dbReference type="ChEBI" id="CHEBI:15378"/>
        <dbReference type="ChEBI" id="CHEBI:28868"/>
        <dbReference type="ChEBI" id="CHEBI:35746"/>
        <dbReference type="ChEBI" id="CHEBI:57540"/>
        <dbReference type="ChEBI" id="CHEBI:57945"/>
    </reaction>
</comment>
<comment type="catalytic activity">
    <reaction evidence="7">
        <text>hexadecanoate + NADH + 2 H(+) = hexadecanal + NAD(+) + H2O</text>
        <dbReference type="Rhea" id="RHEA:33739"/>
        <dbReference type="ChEBI" id="CHEBI:7896"/>
        <dbReference type="ChEBI" id="CHEBI:15377"/>
        <dbReference type="ChEBI" id="CHEBI:15378"/>
        <dbReference type="ChEBI" id="CHEBI:17600"/>
        <dbReference type="ChEBI" id="CHEBI:57540"/>
        <dbReference type="ChEBI" id="CHEBI:57945"/>
    </reaction>
</comment>
<comment type="catalytic activity">
    <reaction evidence="7">
        <text>octanal + NAD(+) + H2O = octanoate + NADH + 2 H(+)</text>
        <dbReference type="Rhea" id="RHEA:44100"/>
        <dbReference type="ChEBI" id="CHEBI:15377"/>
        <dbReference type="ChEBI" id="CHEBI:15378"/>
        <dbReference type="ChEBI" id="CHEBI:17935"/>
        <dbReference type="ChEBI" id="CHEBI:25646"/>
        <dbReference type="ChEBI" id="CHEBI:57540"/>
        <dbReference type="ChEBI" id="CHEBI:57945"/>
    </reaction>
</comment>
<comment type="catalytic activity">
    <reaction evidence="3">
        <text>(2E)-hexadecenal + NAD(+) + H2O = (E)-hexadec-2-enoate + NADH + 2 H(+)</text>
        <dbReference type="Rhea" id="RHEA:36135"/>
        <dbReference type="ChEBI" id="CHEBI:15377"/>
        <dbReference type="ChEBI" id="CHEBI:15378"/>
        <dbReference type="ChEBI" id="CHEBI:17585"/>
        <dbReference type="ChEBI" id="CHEBI:57540"/>
        <dbReference type="ChEBI" id="CHEBI:57945"/>
        <dbReference type="ChEBI" id="CHEBI:72745"/>
    </reaction>
</comment>
<comment type="catalytic activity">
    <reaction evidence="3">
        <text>22-oxodocosanoate + NAD(+) + H2O = docosanedioate + NADH + 2 H(+)</text>
        <dbReference type="Rhea" id="RHEA:39015"/>
        <dbReference type="ChEBI" id="CHEBI:15377"/>
        <dbReference type="ChEBI" id="CHEBI:15378"/>
        <dbReference type="ChEBI" id="CHEBI:57540"/>
        <dbReference type="ChEBI" id="CHEBI:57945"/>
        <dbReference type="ChEBI" id="CHEBI:76298"/>
        <dbReference type="ChEBI" id="CHEBI:76299"/>
    </reaction>
</comment>
<comment type="catalytic activity">
    <reaction evidence="3">
        <text>2,6,10,14-tetramethylpentadecanal + NAD(+) + H2O = 2,6,10,14-tetramethylpentadecanoate + NADH + 2 H(+)</text>
        <dbReference type="Rhea" id="RHEA:44016"/>
        <dbReference type="ChEBI" id="CHEBI:15377"/>
        <dbReference type="ChEBI" id="CHEBI:15378"/>
        <dbReference type="ChEBI" id="CHEBI:49189"/>
        <dbReference type="ChEBI" id="CHEBI:57540"/>
        <dbReference type="ChEBI" id="CHEBI:57945"/>
        <dbReference type="ChEBI" id="CHEBI:77268"/>
    </reaction>
</comment>
<comment type="catalytic activity">
    <reaction evidence="3">
        <text>octadecanal + NAD(+) + H2O = octadecanoate + NADH + 2 H(+)</text>
        <dbReference type="Rhea" id="RHEA:44020"/>
        <dbReference type="ChEBI" id="CHEBI:15377"/>
        <dbReference type="ChEBI" id="CHEBI:15378"/>
        <dbReference type="ChEBI" id="CHEBI:17034"/>
        <dbReference type="ChEBI" id="CHEBI:25629"/>
        <dbReference type="ChEBI" id="CHEBI:57540"/>
        <dbReference type="ChEBI" id="CHEBI:57945"/>
    </reaction>
</comment>
<comment type="catalytic activity">
    <reaction evidence="3">
        <text>dodecanoate + NADH + 2 H(+) = dodecanal + NAD(+) + H2O</text>
        <dbReference type="Rhea" id="RHEA:44168"/>
        <dbReference type="ChEBI" id="CHEBI:15377"/>
        <dbReference type="ChEBI" id="CHEBI:15378"/>
        <dbReference type="ChEBI" id="CHEBI:18262"/>
        <dbReference type="ChEBI" id="CHEBI:27836"/>
        <dbReference type="ChEBI" id="CHEBI:57540"/>
        <dbReference type="ChEBI" id="CHEBI:57945"/>
    </reaction>
</comment>
<comment type="catalytic activity">
    <reaction evidence="3">
        <text>decanal + NAD(+) + H2O = decanoate + NADH + 2 H(+)</text>
        <dbReference type="Rhea" id="RHEA:44104"/>
        <dbReference type="ChEBI" id="CHEBI:15377"/>
        <dbReference type="ChEBI" id="CHEBI:15378"/>
        <dbReference type="ChEBI" id="CHEBI:27689"/>
        <dbReference type="ChEBI" id="CHEBI:31457"/>
        <dbReference type="ChEBI" id="CHEBI:57540"/>
        <dbReference type="ChEBI" id="CHEBI:57945"/>
    </reaction>
</comment>
<comment type="catalytic activity">
    <reaction evidence="3">
        <text>tetradecanal + NAD(+) + H2O = tetradecanoate + NADH + 2 H(+)</text>
        <dbReference type="Rhea" id="RHEA:44172"/>
        <dbReference type="ChEBI" id="CHEBI:15377"/>
        <dbReference type="ChEBI" id="CHEBI:15378"/>
        <dbReference type="ChEBI" id="CHEBI:30807"/>
        <dbReference type="ChEBI" id="CHEBI:57540"/>
        <dbReference type="ChEBI" id="CHEBI:57945"/>
        <dbReference type="ChEBI" id="CHEBI:84067"/>
    </reaction>
</comment>
<comment type="catalytic activity">
    <reaction evidence="3">
        <text>heptanal + NAD(+) + H2O = heptanoate + NADH + 2 H(+)</text>
        <dbReference type="Rhea" id="RHEA:44108"/>
        <dbReference type="ChEBI" id="CHEBI:15377"/>
        <dbReference type="ChEBI" id="CHEBI:15378"/>
        <dbReference type="ChEBI" id="CHEBI:32362"/>
        <dbReference type="ChEBI" id="CHEBI:34787"/>
        <dbReference type="ChEBI" id="CHEBI:57540"/>
        <dbReference type="ChEBI" id="CHEBI:57945"/>
    </reaction>
</comment>
<comment type="catalytic activity">
    <reaction evidence="3">
        <text>(2E,6E)-farnesal + NAD(+) + H2O = (2E,6E)-farnesoate + NADH + 2 H(+)</text>
        <dbReference type="Rhea" id="RHEA:24216"/>
        <dbReference type="ChEBI" id="CHEBI:15377"/>
        <dbReference type="ChEBI" id="CHEBI:15378"/>
        <dbReference type="ChEBI" id="CHEBI:15894"/>
        <dbReference type="ChEBI" id="CHEBI:57540"/>
        <dbReference type="ChEBI" id="CHEBI:57945"/>
        <dbReference type="ChEBI" id="CHEBI:83276"/>
        <dbReference type="EC" id="1.2.1.94"/>
    </reaction>
</comment>
<comment type="subunit">
    <text evidence="3">Homodimer.</text>
</comment>
<comment type="subcellular location">
    <subcellularLocation>
        <location evidence="7">Membrane</location>
    </subcellularLocation>
    <subcellularLocation>
        <location evidence="3">Microsome membrane</location>
        <topology evidence="3">Single-pass membrane protein</topology>
    </subcellularLocation>
    <subcellularLocation>
        <location evidence="3">Endoplasmic reticulum membrane</location>
        <topology evidence="3">Single-pass membrane protein</topology>
        <orientation evidence="2">Cytoplasmic side</orientation>
    </subcellularLocation>
</comment>
<comment type="similarity">
    <text evidence="8">Belongs to the aldehyde dehydrogenase family.</text>
</comment>